<proteinExistence type="evidence at transcript level"/>
<feature type="chain" id="PRO_0000438400" description="Probable 3-ketosteroid-9-alpha-monooxygenase, oxygenase component">
    <location>
        <begin position="1"/>
        <end position="399"/>
    </location>
</feature>
<feature type="domain" description="Rieske" evidence="2">
    <location>
        <begin position="26"/>
        <end position="128"/>
    </location>
</feature>
<feature type="binding site" evidence="2">
    <location>
        <position position="67"/>
    </location>
    <ligand>
        <name>[2Fe-2S] cluster</name>
        <dbReference type="ChEBI" id="CHEBI:190135"/>
    </ligand>
</feature>
<feature type="binding site" evidence="2">
    <location>
        <position position="69"/>
    </location>
    <ligand>
        <name>[2Fe-2S] cluster</name>
        <dbReference type="ChEBI" id="CHEBI:190135"/>
    </ligand>
</feature>
<feature type="binding site" evidence="2">
    <location>
        <position position="86"/>
    </location>
    <ligand>
        <name>[2Fe-2S] cluster</name>
        <dbReference type="ChEBI" id="CHEBI:190135"/>
    </ligand>
</feature>
<feature type="binding site" evidence="2">
    <location>
        <position position="89"/>
    </location>
    <ligand>
        <name>[2Fe-2S] cluster</name>
        <dbReference type="ChEBI" id="CHEBI:190135"/>
    </ligand>
</feature>
<feature type="binding site" evidence="1">
    <location>
        <position position="175"/>
    </location>
    <ligand>
        <name>Fe cation</name>
        <dbReference type="ChEBI" id="CHEBI:24875"/>
    </ligand>
</feature>
<feature type="binding site" evidence="1">
    <location>
        <position position="181"/>
    </location>
    <ligand>
        <name>Fe cation</name>
        <dbReference type="ChEBI" id="CHEBI:24875"/>
    </ligand>
</feature>
<feature type="binding site" evidence="1">
    <location>
        <position position="186"/>
    </location>
    <ligand>
        <name>Fe cation</name>
        <dbReference type="ChEBI" id="CHEBI:24875"/>
    </ligand>
</feature>
<feature type="binding site" evidence="1">
    <location>
        <position position="307"/>
    </location>
    <ligand>
        <name>Fe cation</name>
        <dbReference type="ChEBI" id="CHEBI:24875"/>
    </ligand>
</feature>
<name>KSHA2_RHORH</name>
<sequence>MGSTDTEDQVRTIDVGTPPERYARGWHCLGLVRDFADGKPHQVDAFGTSLVVFAGEDGKLNVLDAYCRHMGGNLAQGSVKGNTIACPFHDWRWRGDGKCAEIPYARRVPPLARTRTWPVAEVSGQLFVWHDPQGSKPPAELAVPEVPTYGDPGWTDWVWNSIEVTGSHCREIVDNVVDMAHFFYVHYGMPTYFRNVFEGHTATQVMRSLPRADAVGVSQATNYSAESRSDATYYGPSYMIDKLWSAGRDPESTPNIYLINCHYPISPTSFRLQYGVMVERPEGVPPEQAEQIAQAVAQGVAIGFEQDVEIWKNKSRIDNPLLCEEDGPVYQLRRWYEQFYVDVEDIRPEMVNRFEYEIDTTRALTSWQAEVDENVAAGRSAFAPNLTRAREAASAESGS</sequence>
<protein>
    <recommendedName>
        <fullName evidence="4">Probable 3-ketosteroid-9-alpha-monooxygenase, oxygenase component</fullName>
    </recommendedName>
    <alternativeName>
        <fullName evidence="4">Probable 3-ketosteroid-9-alpha-hydroxylase, oxygenase component</fullName>
        <shortName evidence="4">KSH</shortName>
        <ecNumber evidence="5">1.14.13.-</ecNumber>
    </alternativeName>
    <alternativeName>
        <fullName evidence="5">Rieske-type oxygenase</fullName>
        <shortName evidence="5">RO</shortName>
    </alternativeName>
</protein>
<gene>
    <name evidence="4" type="primary">kshA</name>
    <name evidence="4" type="synonym">kshA2</name>
</gene>
<evidence type="ECO:0000250" key="1">
    <source>
        <dbReference type="UniProtKB" id="F1CMY8"/>
    </source>
</evidence>
<evidence type="ECO:0000255" key="2">
    <source>
        <dbReference type="PROSITE-ProRule" id="PRU00628"/>
    </source>
</evidence>
<evidence type="ECO:0000269" key="3">
    <source>
    </source>
</evidence>
<evidence type="ECO:0000303" key="4">
    <source>
    </source>
</evidence>
<evidence type="ECO:0000305" key="5">
    <source>
    </source>
</evidence>
<accession>F1CMX6</accession>
<organism>
    <name type="scientific">Rhodococcus rhodochrous</name>
    <dbReference type="NCBI Taxonomy" id="1829"/>
    <lineage>
        <taxon>Bacteria</taxon>
        <taxon>Bacillati</taxon>
        <taxon>Actinomycetota</taxon>
        <taxon>Actinomycetes</taxon>
        <taxon>Mycobacteriales</taxon>
        <taxon>Nocardiaceae</taxon>
        <taxon>Rhodococcus</taxon>
    </lineage>
</organism>
<keyword id="KW-0001">2Fe-2S</keyword>
<keyword id="KW-0408">Iron</keyword>
<keyword id="KW-0411">Iron-sulfur</keyword>
<keyword id="KW-0442">Lipid degradation</keyword>
<keyword id="KW-0443">Lipid metabolism</keyword>
<keyword id="KW-0479">Metal-binding</keyword>
<keyword id="KW-0520">NAD</keyword>
<keyword id="KW-0560">Oxidoreductase</keyword>
<keyword id="KW-0753">Steroid metabolism</keyword>
<reference key="1">
    <citation type="journal article" date="2011" name="J. Bacteriol.">
        <title>Multiplicity of 3-ketosteroid-9alpha-hydroxylase enzymes in Rhodococcus rhodochrous DSM43269 for specific degradation of different classes of steroids.</title>
        <authorList>
            <person name="Petrusma M."/>
            <person name="Hessels G."/>
            <person name="Dijkhuizen L."/>
            <person name="van der Geize R."/>
        </authorList>
    </citation>
    <scope>NUCLEOTIDE SEQUENCE [GENOMIC DNA]</scope>
    <scope>FUNCTION</scope>
    <scope>INDUCTION</scope>
    <source>
        <strain>DSM 43269</strain>
    </source>
</reference>
<dbReference type="EC" id="1.14.13.-" evidence="5"/>
<dbReference type="EMBL" id="HQ425874">
    <property type="protein sequence ID" value="ADY18316.1"/>
    <property type="molecule type" value="Genomic_DNA"/>
</dbReference>
<dbReference type="RefSeq" id="WP_283479672.1">
    <property type="nucleotide sequence ID" value="NZ_JASIRK010000006.1"/>
</dbReference>
<dbReference type="SMR" id="F1CMX6"/>
<dbReference type="BRENDA" id="1.14.15.30">
    <property type="organism ID" value="5395"/>
</dbReference>
<dbReference type="GO" id="GO:0051537">
    <property type="term" value="F:2 iron, 2 sulfur cluster binding"/>
    <property type="evidence" value="ECO:0007669"/>
    <property type="project" value="UniProtKB-KW"/>
</dbReference>
<dbReference type="GO" id="GO:0005506">
    <property type="term" value="F:iron ion binding"/>
    <property type="evidence" value="ECO:0000250"/>
    <property type="project" value="UniProtKB"/>
</dbReference>
<dbReference type="GO" id="GO:0004497">
    <property type="term" value="F:monooxygenase activity"/>
    <property type="evidence" value="ECO:0007669"/>
    <property type="project" value="UniProtKB-ARBA"/>
</dbReference>
<dbReference type="GO" id="GO:0016705">
    <property type="term" value="F:oxidoreductase activity, acting on paired donors, with incorporation or reduction of molecular oxygen"/>
    <property type="evidence" value="ECO:0007669"/>
    <property type="project" value="UniProtKB-ARBA"/>
</dbReference>
<dbReference type="GO" id="GO:0008203">
    <property type="term" value="P:cholesterol metabolic process"/>
    <property type="evidence" value="ECO:0007669"/>
    <property type="project" value="InterPro"/>
</dbReference>
<dbReference type="GO" id="GO:0016042">
    <property type="term" value="P:lipid catabolic process"/>
    <property type="evidence" value="ECO:0007669"/>
    <property type="project" value="UniProtKB-KW"/>
</dbReference>
<dbReference type="CDD" id="cd03531">
    <property type="entry name" value="Rieske_RO_Alpha_KSH"/>
    <property type="match status" value="1"/>
</dbReference>
<dbReference type="Gene3D" id="3.90.380.10">
    <property type="entry name" value="Naphthalene 1,2-dioxygenase Alpha Subunit, Chain A, domain 1"/>
    <property type="match status" value="1"/>
</dbReference>
<dbReference type="Gene3D" id="2.102.10.10">
    <property type="entry name" value="Rieske [2Fe-2S] iron-sulphur domain"/>
    <property type="match status" value="1"/>
</dbReference>
<dbReference type="InterPro" id="IPR050584">
    <property type="entry name" value="Cholesterol_7-desaturase"/>
</dbReference>
<dbReference type="InterPro" id="IPR045605">
    <property type="entry name" value="KshA-like_C"/>
</dbReference>
<dbReference type="InterPro" id="IPR017941">
    <property type="entry name" value="Rieske_2Fe-2S"/>
</dbReference>
<dbReference type="InterPro" id="IPR036922">
    <property type="entry name" value="Rieske_2Fe-2S_sf"/>
</dbReference>
<dbReference type="PANTHER" id="PTHR21266:SF60">
    <property type="entry name" value="3-KETOSTEROID-9-ALPHA-MONOOXYGENASE, OXYGENASE COMPONENT"/>
    <property type="match status" value="1"/>
</dbReference>
<dbReference type="PANTHER" id="PTHR21266">
    <property type="entry name" value="IRON-SULFUR DOMAIN CONTAINING PROTEIN"/>
    <property type="match status" value="1"/>
</dbReference>
<dbReference type="Pfam" id="PF19298">
    <property type="entry name" value="KshA_C"/>
    <property type="match status" value="1"/>
</dbReference>
<dbReference type="Pfam" id="PF00355">
    <property type="entry name" value="Rieske"/>
    <property type="match status" value="1"/>
</dbReference>
<dbReference type="SUPFAM" id="SSF55961">
    <property type="entry name" value="Bet v1-like"/>
    <property type="match status" value="1"/>
</dbReference>
<dbReference type="SUPFAM" id="SSF50022">
    <property type="entry name" value="ISP domain"/>
    <property type="match status" value="1"/>
</dbReference>
<dbReference type="PROSITE" id="PS51296">
    <property type="entry name" value="RIESKE"/>
    <property type="match status" value="1"/>
</dbReference>
<comment type="function">
    <text evidence="5">Could catalyze the introduction of a 9alpha-hydroxyl moiety into the ring B of 3-ketosteroid substrates.</text>
</comment>
<comment type="cofactor">
    <cofactor evidence="2">
        <name>[2Fe-2S] cluster</name>
        <dbReference type="ChEBI" id="CHEBI:190135"/>
    </cofactor>
    <text evidence="2">Binds 1 [2Fe-2S] cluster per subunit.</text>
</comment>
<comment type="cofactor">
    <cofactor evidence="1">
        <name>Fe cation</name>
        <dbReference type="ChEBI" id="CHEBI:24875"/>
    </cofactor>
    <text evidence="1">Binds 1 Fe cation.</text>
</comment>
<comment type="subunit">
    <text evidence="1">Homotrimer. The two-component system 3-ketosteroid-9-alpha-monooxygenase is composed of an oxygenase component KshA and a reductase component KshB.</text>
</comment>
<comment type="induction">
    <text evidence="3">By cholic acid.</text>
</comment>